<protein>
    <recommendedName>
        <fullName evidence="1">DNA repair protein RecO</fullName>
    </recommendedName>
    <alternativeName>
        <fullName evidence="1">Recombination protein O</fullName>
    </alternativeName>
</protein>
<comment type="function">
    <text evidence="1">Involved in DNA repair and RecF pathway recombination.</text>
</comment>
<comment type="subunit">
    <text evidence="1">Monomer.</text>
</comment>
<comment type="similarity">
    <text evidence="1">Belongs to the RecO family.</text>
</comment>
<evidence type="ECO:0000255" key="1">
    <source>
        <dbReference type="HAMAP-Rule" id="MF_00201"/>
    </source>
</evidence>
<reference key="1">
    <citation type="submission" date="2007-11" db="EMBL/GenBank/DDBJ databases">
        <authorList>
            <consortium name="The Salmonella enterica serovar Paratyphi B Genome Sequencing Project"/>
            <person name="McClelland M."/>
            <person name="Sanderson E.K."/>
            <person name="Porwollik S."/>
            <person name="Spieth J."/>
            <person name="Clifton W.S."/>
            <person name="Fulton R."/>
            <person name="Cordes M."/>
            <person name="Wollam A."/>
            <person name="Shah N."/>
            <person name="Pepin K."/>
            <person name="Bhonagiri V."/>
            <person name="Nash W."/>
            <person name="Johnson M."/>
            <person name="Thiruvilangam P."/>
            <person name="Wilson R."/>
        </authorList>
    </citation>
    <scope>NUCLEOTIDE SEQUENCE [LARGE SCALE GENOMIC DNA]</scope>
    <source>
        <strain>ATCC BAA-1250 / SPB7</strain>
    </source>
</reference>
<proteinExistence type="inferred from homology"/>
<keyword id="KW-0227">DNA damage</keyword>
<keyword id="KW-0233">DNA recombination</keyword>
<keyword id="KW-0234">DNA repair</keyword>
<dbReference type="EMBL" id="CP000886">
    <property type="protein sequence ID" value="ABX65783.1"/>
    <property type="molecule type" value="Genomic_DNA"/>
</dbReference>
<dbReference type="RefSeq" id="WP_000399380.1">
    <property type="nucleotide sequence ID" value="NC_010102.1"/>
</dbReference>
<dbReference type="SMR" id="A9N1T3"/>
<dbReference type="KEGG" id="spq:SPAB_00347"/>
<dbReference type="PATRIC" id="fig|1016998.12.peg.329"/>
<dbReference type="HOGENOM" id="CLU_066645_1_0_6"/>
<dbReference type="BioCyc" id="SENT1016998:SPAB_RS01420-MONOMER"/>
<dbReference type="Proteomes" id="UP000008556">
    <property type="component" value="Chromosome"/>
</dbReference>
<dbReference type="GO" id="GO:0043590">
    <property type="term" value="C:bacterial nucleoid"/>
    <property type="evidence" value="ECO:0007669"/>
    <property type="project" value="TreeGrafter"/>
</dbReference>
<dbReference type="GO" id="GO:0006310">
    <property type="term" value="P:DNA recombination"/>
    <property type="evidence" value="ECO:0007669"/>
    <property type="project" value="UniProtKB-UniRule"/>
</dbReference>
<dbReference type="GO" id="GO:0006302">
    <property type="term" value="P:double-strand break repair"/>
    <property type="evidence" value="ECO:0007669"/>
    <property type="project" value="TreeGrafter"/>
</dbReference>
<dbReference type="FunFam" id="1.20.1440.120:FF:000001">
    <property type="entry name" value="DNA repair protein RecO"/>
    <property type="match status" value="1"/>
</dbReference>
<dbReference type="FunFam" id="2.40.50.140:FF:000074">
    <property type="entry name" value="DNA repair protein RecO"/>
    <property type="match status" value="1"/>
</dbReference>
<dbReference type="Gene3D" id="2.40.50.140">
    <property type="entry name" value="Nucleic acid-binding proteins"/>
    <property type="match status" value="1"/>
</dbReference>
<dbReference type="Gene3D" id="1.20.1440.120">
    <property type="entry name" value="Recombination protein O, C-terminal domain"/>
    <property type="match status" value="1"/>
</dbReference>
<dbReference type="HAMAP" id="MF_00201">
    <property type="entry name" value="RecO"/>
    <property type="match status" value="1"/>
</dbReference>
<dbReference type="InterPro" id="IPR037278">
    <property type="entry name" value="ARFGAP/RecO"/>
</dbReference>
<dbReference type="InterPro" id="IPR022572">
    <property type="entry name" value="DNA_rep/recomb_RecO_N"/>
</dbReference>
<dbReference type="InterPro" id="IPR012340">
    <property type="entry name" value="NA-bd_OB-fold"/>
</dbReference>
<dbReference type="InterPro" id="IPR003717">
    <property type="entry name" value="RecO"/>
</dbReference>
<dbReference type="InterPro" id="IPR042242">
    <property type="entry name" value="RecO_C"/>
</dbReference>
<dbReference type="NCBIfam" id="TIGR00613">
    <property type="entry name" value="reco"/>
    <property type="match status" value="1"/>
</dbReference>
<dbReference type="PANTHER" id="PTHR33991">
    <property type="entry name" value="DNA REPAIR PROTEIN RECO"/>
    <property type="match status" value="1"/>
</dbReference>
<dbReference type="PANTHER" id="PTHR33991:SF1">
    <property type="entry name" value="DNA REPAIR PROTEIN RECO"/>
    <property type="match status" value="1"/>
</dbReference>
<dbReference type="Pfam" id="PF02565">
    <property type="entry name" value="RecO_C"/>
    <property type="match status" value="1"/>
</dbReference>
<dbReference type="Pfam" id="PF11967">
    <property type="entry name" value="RecO_N"/>
    <property type="match status" value="1"/>
</dbReference>
<dbReference type="SUPFAM" id="SSF57863">
    <property type="entry name" value="ArfGap/RecO-like zinc finger"/>
    <property type="match status" value="1"/>
</dbReference>
<dbReference type="SUPFAM" id="SSF50249">
    <property type="entry name" value="Nucleic acid-binding proteins"/>
    <property type="match status" value="1"/>
</dbReference>
<feature type="chain" id="PRO_1000077736" description="DNA repair protein RecO">
    <location>
        <begin position="1"/>
        <end position="242"/>
    </location>
</feature>
<sequence length="242" mass="27472">MEGWQRAFVLHSRPWSETSLMLDVFTEESGRVRLVAKGARSKRSNLKGALQPFTPLLLRYSGRGEVKTLRSAEAVSLALPLSGITLYSGLYINELLSRVLEYETRFSELFFDYLNCIQALAGTTGSPEPALRRFELALLGHLGYGVNFTHCAGSGERVDDTMTYRYREEKGFFASVVIDNNTFTGRHLKALEAREFPDVDTLRAAKRFTRMALKPYLGGKPLKSRELFRQFMPKRTVKTKKD</sequence>
<gene>
    <name evidence="1" type="primary">recO</name>
    <name type="ordered locus">SPAB_00347</name>
</gene>
<organism>
    <name type="scientific">Salmonella paratyphi B (strain ATCC BAA-1250 / SPB7)</name>
    <dbReference type="NCBI Taxonomy" id="1016998"/>
    <lineage>
        <taxon>Bacteria</taxon>
        <taxon>Pseudomonadati</taxon>
        <taxon>Pseudomonadota</taxon>
        <taxon>Gammaproteobacteria</taxon>
        <taxon>Enterobacterales</taxon>
        <taxon>Enterobacteriaceae</taxon>
        <taxon>Salmonella</taxon>
    </lineage>
</organism>
<accession>A9N1T3</accession>
<name>RECO_SALPB</name>